<protein>
    <recommendedName>
        <fullName>Tripartite motif-containing protein 5</fullName>
        <ecNumber>2.3.2.27</ecNumber>
    </recommendedName>
    <alternativeName>
        <fullName evidence="9">RING-type E3 ubiquitin transferase TRIM5</fullName>
    </alternativeName>
    <alternativeName>
        <fullName>TRIM5alpha</fullName>
    </alternativeName>
</protein>
<name>TRIM5_CHLPG</name>
<dbReference type="EC" id="2.3.2.27"/>
<dbReference type="EMBL" id="AY740612">
    <property type="protein sequence ID" value="AAW72440.1"/>
    <property type="molecule type" value="mRNA"/>
</dbReference>
<dbReference type="SMR" id="Q5C8U4"/>
<dbReference type="UniPathway" id="UPA00143"/>
<dbReference type="GO" id="GO:0005634">
    <property type="term" value="C:nucleus"/>
    <property type="evidence" value="ECO:0007669"/>
    <property type="project" value="UniProtKB-SubCell"/>
</dbReference>
<dbReference type="GO" id="GO:0000932">
    <property type="term" value="C:P-body"/>
    <property type="evidence" value="ECO:0000250"/>
    <property type="project" value="UniProtKB"/>
</dbReference>
<dbReference type="GO" id="GO:0038187">
    <property type="term" value="F:pattern recognition receptor activity"/>
    <property type="evidence" value="ECO:0000250"/>
    <property type="project" value="UniProtKB"/>
</dbReference>
<dbReference type="GO" id="GO:0004842">
    <property type="term" value="F:ubiquitin-protein transferase activity"/>
    <property type="evidence" value="ECO:0000250"/>
    <property type="project" value="UniProtKB"/>
</dbReference>
<dbReference type="GO" id="GO:0008270">
    <property type="term" value="F:zinc ion binding"/>
    <property type="evidence" value="ECO:0007669"/>
    <property type="project" value="UniProtKB-KW"/>
</dbReference>
<dbReference type="GO" id="GO:0002218">
    <property type="term" value="P:activation of innate immune response"/>
    <property type="evidence" value="ECO:0000250"/>
    <property type="project" value="UniProtKB"/>
</dbReference>
<dbReference type="GO" id="GO:0006914">
    <property type="term" value="P:autophagy"/>
    <property type="evidence" value="ECO:0007669"/>
    <property type="project" value="UniProtKB-KW"/>
</dbReference>
<dbReference type="GO" id="GO:0051607">
    <property type="term" value="P:defense response to virus"/>
    <property type="evidence" value="ECO:0000304"/>
    <property type="project" value="UniProtKB"/>
</dbReference>
<dbReference type="GO" id="GO:0045087">
    <property type="term" value="P:innate immune response"/>
    <property type="evidence" value="ECO:0007669"/>
    <property type="project" value="UniProtKB-KW"/>
</dbReference>
<dbReference type="GO" id="GO:0043123">
    <property type="term" value="P:positive regulation of canonical NF-kappaB signal transduction"/>
    <property type="evidence" value="ECO:0000250"/>
    <property type="project" value="UniProtKB"/>
</dbReference>
<dbReference type="GO" id="GO:0043410">
    <property type="term" value="P:positive regulation of MAPK cascade"/>
    <property type="evidence" value="ECO:0000250"/>
    <property type="project" value="UniProtKB"/>
</dbReference>
<dbReference type="GO" id="GO:0051092">
    <property type="term" value="P:positive regulation of NF-kappaB transcription factor activity"/>
    <property type="evidence" value="ECO:0000250"/>
    <property type="project" value="UniProtKB"/>
</dbReference>
<dbReference type="GO" id="GO:0070534">
    <property type="term" value="P:protein K63-linked ubiquitination"/>
    <property type="evidence" value="ECO:0000250"/>
    <property type="project" value="UniProtKB"/>
</dbReference>
<dbReference type="GO" id="GO:0031664">
    <property type="term" value="P:regulation of lipopolysaccharide-mediated signaling pathway"/>
    <property type="evidence" value="ECO:0000250"/>
    <property type="project" value="UniProtKB"/>
</dbReference>
<dbReference type="CDD" id="cd19761">
    <property type="entry name" value="Bbox2_TRIM5-like"/>
    <property type="match status" value="1"/>
</dbReference>
<dbReference type="CDD" id="cd16591">
    <property type="entry name" value="RING-HC_TRIM5-like_C-IV"/>
    <property type="match status" value="1"/>
</dbReference>
<dbReference type="CDD" id="cd15822">
    <property type="entry name" value="SPRY_PRY_TRIM5"/>
    <property type="match status" value="1"/>
</dbReference>
<dbReference type="FunFam" id="3.30.160.60:FF:000386">
    <property type="entry name" value="Tripartite motif-containing 5 (Predicted)"/>
    <property type="match status" value="1"/>
</dbReference>
<dbReference type="FunFam" id="3.30.40.10:FF:000144">
    <property type="entry name" value="Tripartite motif-containing 5 (Predicted)"/>
    <property type="match status" value="1"/>
</dbReference>
<dbReference type="Gene3D" id="2.60.120.920">
    <property type="match status" value="1"/>
</dbReference>
<dbReference type="Gene3D" id="3.30.160.60">
    <property type="entry name" value="Classic Zinc Finger"/>
    <property type="match status" value="1"/>
</dbReference>
<dbReference type="Gene3D" id="3.30.40.10">
    <property type="entry name" value="Zinc/RING finger domain, C3HC4 (zinc finger)"/>
    <property type="match status" value="1"/>
</dbReference>
<dbReference type="InterPro" id="IPR001870">
    <property type="entry name" value="B30.2/SPRY"/>
</dbReference>
<dbReference type="InterPro" id="IPR043136">
    <property type="entry name" value="B30.2/SPRY_sf"/>
</dbReference>
<dbReference type="InterPro" id="IPR003879">
    <property type="entry name" value="Butyrophylin_SPRY"/>
</dbReference>
<dbReference type="InterPro" id="IPR013320">
    <property type="entry name" value="ConA-like_dom_sf"/>
</dbReference>
<dbReference type="InterPro" id="IPR003877">
    <property type="entry name" value="SPRY_dom"/>
</dbReference>
<dbReference type="InterPro" id="IPR050143">
    <property type="entry name" value="TRIM/RBCC"/>
</dbReference>
<dbReference type="InterPro" id="IPR027370">
    <property type="entry name" value="Znf-RING_euk"/>
</dbReference>
<dbReference type="InterPro" id="IPR000315">
    <property type="entry name" value="Znf_B-box"/>
</dbReference>
<dbReference type="InterPro" id="IPR001841">
    <property type="entry name" value="Znf_RING"/>
</dbReference>
<dbReference type="InterPro" id="IPR013083">
    <property type="entry name" value="Znf_RING/FYVE/PHD"/>
</dbReference>
<dbReference type="InterPro" id="IPR017907">
    <property type="entry name" value="Znf_RING_CS"/>
</dbReference>
<dbReference type="PANTHER" id="PTHR24103">
    <property type="entry name" value="E3 UBIQUITIN-PROTEIN LIGASE TRIM"/>
    <property type="match status" value="1"/>
</dbReference>
<dbReference type="Pfam" id="PF00622">
    <property type="entry name" value="SPRY"/>
    <property type="match status" value="1"/>
</dbReference>
<dbReference type="Pfam" id="PF00643">
    <property type="entry name" value="zf-B_box"/>
    <property type="match status" value="1"/>
</dbReference>
<dbReference type="Pfam" id="PF13445">
    <property type="entry name" value="zf-RING_UBOX"/>
    <property type="match status" value="1"/>
</dbReference>
<dbReference type="PRINTS" id="PR01407">
    <property type="entry name" value="BUTYPHLNCDUF"/>
</dbReference>
<dbReference type="SMART" id="SM00336">
    <property type="entry name" value="BBOX"/>
    <property type="match status" value="1"/>
</dbReference>
<dbReference type="SMART" id="SM00184">
    <property type="entry name" value="RING"/>
    <property type="match status" value="1"/>
</dbReference>
<dbReference type="SMART" id="SM00449">
    <property type="entry name" value="SPRY"/>
    <property type="match status" value="1"/>
</dbReference>
<dbReference type="SUPFAM" id="SSF57845">
    <property type="entry name" value="B-box zinc-binding domain"/>
    <property type="match status" value="1"/>
</dbReference>
<dbReference type="SUPFAM" id="SSF49899">
    <property type="entry name" value="Concanavalin A-like lectins/glucanases"/>
    <property type="match status" value="1"/>
</dbReference>
<dbReference type="SUPFAM" id="SSF57850">
    <property type="entry name" value="RING/U-box"/>
    <property type="match status" value="1"/>
</dbReference>
<dbReference type="PROSITE" id="PS50188">
    <property type="entry name" value="B302_SPRY"/>
    <property type="match status" value="1"/>
</dbReference>
<dbReference type="PROSITE" id="PS50119">
    <property type="entry name" value="ZF_BBOX"/>
    <property type="match status" value="1"/>
</dbReference>
<dbReference type="PROSITE" id="PS00518">
    <property type="entry name" value="ZF_RING_1"/>
    <property type="match status" value="1"/>
</dbReference>
<dbReference type="PROSITE" id="PS50089">
    <property type="entry name" value="ZF_RING_2"/>
    <property type="match status" value="1"/>
</dbReference>
<accession>Q5C8U4</accession>
<reference key="1">
    <citation type="journal article" date="2005" name="J. Virol.">
        <title>The B30.2(SPRY) domain of the retroviral restriction factor TRIM5alpha exhibits lineage-specific length and sequence variation in primates.</title>
        <authorList>
            <person name="Song B."/>
            <person name="Gold B."/>
            <person name="O'Huigin C."/>
            <person name="Javanbakht H."/>
            <person name="Li X."/>
            <person name="Stremlau M."/>
            <person name="Winkler C."/>
            <person name="Dean M."/>
            <person name="Sodroski J."/>
        </authorList>
    </citation>
    <scope>NUCLEOTIDE SEQUENCE [MRNA]</scope>
</reference>
<reference key="2">
    <citation type="journal article" date="2012" name="Front. Microbiol.">
        <title>TRIM5alpha and species tropism of HIV/SIV.</title>
        <authorList>
            <person name="Nakayama E.E."/>
            <person name="Shioda T."/>
        </authorList>
    </citation>
    <scope>REVIEW</scope>
    <scope>FUNCTION</scope>
</reference>
<evidence type="ECO:0000250" key="1"/>
<evidence type="ECO:0000250" key="2">
    <source>
        <dbReference type="UniProtKB" id="Q0PF16"/>
    </source>
</evidence>
<evidence type="ECO:0000250" key="3">
    <source>
        <dbReference type="UniProtKB" id="Q9C035"/>
    </source>
</evidence>
<evidence type="ECO:0000255" key="4"/>
<evidence type="ECO:0000255" key="5">
    <source>
        <dbReference type="PROSITE-ProRule" id="PRU00024"/>
    </source>
</evidence>
<evidence type="ECO:0000255" key="6">
    <source>
        <dbReference type="PROSITE-ProRule" id="PRU00175"/>
    </source>
</evidence>
<evidence type="ECO:0000255" key="7">
    <source>
        <dbReference type="PROSITE-ProRule" id="PRU00548"/>
    </source>
</evidence>
<evidence type="ECO:0000269" key="8">
    <source>
    </source>
</evidence>
<evidence type="ECO:0000305" key="9"/>
<proteinExistence type="evidence at transcript level"/>
<organism>
    <name type="scientific">Chlorocebus pygerythrus</name>
    <name type="common">Vervet monkey</name>
    <name type="synonym">Cercopithecus pygerythrus</name>
    <dbReference type="NCBI Taxonomy" id="60710"/>
    <lineage>
        <taxon>Eukaryota</taxon>
        <taxon>Metazoa</taxon>
        <taxon>Chordata</taxon>
        <taxon>Craniata</taxon>
        <taxon>Vertebrata</taxon>
        <taxon>Euteleostomi</taxon>
        <taxon>Mammalia</taxon>
        <taxon>Eutheria</taxon>
        <taxon>Euarchontoglires</taxon>
        <taxon>Primates</taxon>
        <taxon>Haplorrhini</taxon>
        <taxon>Catarrhini</taxon>
        <taxon>Cercopithecidae</taxon>
        <taxon>Cercopithecinae</taxon>
        <taxon>Chlorocebus</taxon>
    </lineage>
</organism>
<feature type="initiator methionine" description="Removed" evidence="3">
    <location>
        <position position="1"/>
    </location>
</feature>
<feature type="chain" id="PRO_0000273454" description="Tripartite motif-containing protein 5">
    <location>
        <begin position="2"/>
        <end position="515"/>
    </location>
</feature>
<feature type="domain" description="B30.2/SPRY" evidence="7">
    <location>
        <begin position="283"/>
        <end position="515"/>
    </location>
</feature>
<feature type="zinc finger region" description="RING-type" evidence="6">
    <location>
        <begin position="15"/>
        <end position="60"/>
    </location>
</feature>
<feature type="zinc finger region" description="B box-type" evidence="5">
    <location>
        <begin position="92"/>
        <end position="133"/>
    </location>
</feature>
<feature type="region of interest" description="Required for interaction with GABARAP and for autophagy" evidence="2">
    <location>
        <begin position="187"/>
        <end position="200"/>
    </location>
</feature>
<feature type="coiled-coil region" evidence="4">
    <location>
        <begin position="137"/>
        <end position="225"/>
    </location>
</feature>
<feature type="binding site" evidence="5">
    <location>
        <position position="97"/>
    </location>
    <ligand>
        <name>Zn(2+)</name>
        <dbReference type="ChEBI" id="CHEBI:29105"/>
    </ligand>
</feature>
<feature type="binding site" evidence="5">
    <location>
        <position position="100"/>
    </location>
    <ligand>
        <name>Zn(2+)</name>
        <dbReference type="ChEBI" id="CHEBI:29105"/>
    </ligand>
</feature>
<feature type="binding site" evidence="5">
    <location>
        <position position="119"/>
    </location>
    <ligand>
        <name>Zn(2+)</name>
        <dbReference type="ChEBI" id="CHEBI:29105"/>
    </ligand>
</feature>
<feature type="binding site" evidence="5">
    <location>
        <position position="125"/>
    </location>
    <ligand>
        <name>Zn(2+)</name>
        <dbReference type="ChEBI" id="CHEBI:29105"/>
    </ligand>
</feature>
<feature type="modified residue" description="N-acetylalanine" evidence="3">
    <location>
        <position position="2"/>
    </location>
</feature>
<feature type="modified residue" description="Phosphoserine" evidence="3">
    <location>
        <position position="87"/>
    </location>
</feature>
<sequence length="515" mass="59112">MASGILVNVKEEVTCPICLELLTEPLSLPCGHSLCQACITANHKESMLYKEEERSCPVCRISYQPENIQPNRHVANIVEKLREVKLSPEEGQKVDHCARHGEKLLLFCQEDSKVICWLCERSQEHRGHHTFLMEEVAQEYHVKLQTALEMLRQKQQEAEKLEADIREEKASWKIQIDYDKTNVSADFEQLREILDWEESNELQNLEKEEEDILKSLTKSETEMVQQTQYMRELISDLEHRLQGSMMELLQGVDGIIKRVENMTLKKPKTFHKNQRRVFRAPDLKGMLDMFRELTDVRRYWVDVTLAPNNISHAVIAEDKRQVSYRNPQIMYQSPGSLFGSLTNFSYCTGVPGSQSITSGKLTNFNYCTGVLGSQSITSGKHYWEVDVSKKSAWILGVCAGFQPDATYNIEQNENYQPKYGYWVIGLQEGDKYSVFQDGSSHTPFAPFIVPLSVIICPDRVGVFVDYEACTVSFFNITNHGFLIYKFSQCSFSKPVFPYLNPRKCTVPMTLCSPSS</sequence>
<keyword id="KW-0007">Acetylation</keyword>
<keyword id="KW-0051">Antiviral defense</keyword>
<keyword id="KW-0072">Autophagy</keyword>
<keyword id="KW-0175">Coiled coil</keyword>
<keyword id="KW-0963">Cytoplasm</keyword>
<keyword id="KW-0391">Immunity</keyword>
<keyword id="KW-0399">Innate immunity</keyword>
<keyword id="KW-0479">Metal-binding</keyword>
<keyword id="KW-0539">Nucleus</keyword>
<keyword id="KW-0597">Phosphoprotein</keyword>
<keyword id="KW-0808">Transferase</keyword>
<keyword id="KW-0832">Ubl conjugation</keyword>
<keyword id="KW-0833">Ubl conjugation pathway</keyword>
<keyword id="KW-0862">Zinc</keyword>
<keyword id="KW-0863">Zinc-finger</keyword>
<comment type="function">
    <text evidence="3 8">Capsid-specific restriction factor that prevents infection from non-host-adapted retroviruses. Blocks viral replication early in the life cycle, after viral entry but before reverse transcription. In addition to acting as a capsid-specific restriction factor, also acts as a pattern recognition receptor that activates innate immune signaling in response to the retroviral capsid lattice. Binding to the viral capsid triggers its E3 ubiquitin ligase activity, and in concert with the heterodimeric ubiquitin conjugating enzyme complex UBE2V1-UBE2N (also known as UBC13-UEV1A complex) generates 'Lys-63'-linked polyubiquitin chains, which in turn are catalysts in the autophosphorylation of the MAP3K7/TAK1 complex (includes TAK1, TAB2, and TAB3). Activation of the MAP3K7/TAK1 complex by autophosphorylation results in the induction and expression of NF-kappa-B and MAPK-responsive inflammatory genes, thereby leading to an innate immune response in the infected cell. Restricts infection by human immunodeficiency virus type 1 (HIV-1) and N-tropic murine leukemia virus (N-MLV) (PubMed:22291694). Plays a role in regulating autophagy through activation of autophagy regulator BECN1 by causing its dissociation from its inhibitors BCL2 and TAB2 (By similarity).</text>
</comment>
<comment type="catalytic activity">
    <reaction>
        <text>S-ubiquitinyl-[E2 ubiquitin-conjugating enzyme]-L-cysteine + [acceptor protein]-L-lysine = [E2 ubiquitin-conjugating enzyme]-L-cysteine + N(6)-ubiquitinyl-[acceptor protein]-L-lysine.</text>
        <dbReference type="EC" id="2.3.2.27"/>
    </reaction>
</comment>
<comment type="pathway">
    <text>Protein modification; protein ubiquitination.</text>
</comment>
<comment type="subunit">
    <text evidence="2 3">Can form homodimers and homotrimers. In addition to lower-order dimerization, also exhibits a higher-order multimerization and both low- and high-order multimerizations are essential for its restriction activity. Interacts with BTBD1 and BTBD2. Interacts with PSMC4, PSMC5, PSMD7 and HSPA8/HSC70. Interacts (via B30.2/SPRY domain) with HSPA1A/B. Interacts with PSMC2, MAP3K7/TAK1, TAB2 and TAB3. Interacts with SQSTM1. Interacts with TRIM6 and TRIM34. Interacts with ULK1 (phosphorylated form), GABARAP, GABARAPL1, GABARAPL2, MAP1LC3A, MAP1LC3C and BECN1.</text>
</comment>
<comment type="subcellular location">
    <subcellularLocation>
        <location evidence="2">Cytoplasm</location>
    </subcellularLocation>
    <subcellularLocation>
        <location evidence="2">Nucleus</location>
    </subcellularLocation>
    <text evidence="2">Predominantly localizes in cytoplasmic bodies. Localization may be influenced by the coexpression of other TRIM proteins, hence partial nuclear localization is observed in the presence of TRIM22 or TRIM27. In cytoplasmic bodies, colocalizes with proteasomal subunits and SQSTM1.</text>
</comment>
<comment type="domain">
    <text evidence="2 3">The B box-type zinc finger domain and the coiled-coil domain contribute to the higher and low order multimerization respectively which is essential for restriction activity. The coiled coil domain is important for higher order multimerization by promoting the initial dimerization.</text>
</comment>
<comment type="domain">
    <text evidence="1">The B30.2/SPRY domain acts as a capsid recognition domain. Polymorphisms in this domain explain the observed species-specific differences among orthologs (By similarity).</text>
</comment>
<comment type="domain">
    <text evidence="1">The RING-type zinc finger domain confers E3 ubiquitin ligase activity and is essential for retrovirus restriction activity, autoubiquitination and higher-order multimerization.</text>
</comment>
<comment type="PTM">
    <text evidence="1">Degraded in a proteasome-independent fashion in the absence of viral infection but in a proteasome-dependent fashion following exposure to restriction sensitive virus.</text>
</comment>
<comment type="PTM">
    <text evidence="1">Autoubiquitinated in a RING finger- and UBE2D2-dependent manner. Monoubiquitinated by TRIM21. Deubiquitinated by Yersinia YopJ. Ubiquitination may not lead to proteasomal degradation (By similarity).</text>
</comment>
<comment type="similarity">
    <text evidence="9">Belongs to the TRIM/RBCC family.</text>
</comment>
<gene>
    <name type="primary">TRIM5</name>
</gene>